<dbReference type="EMBL" id="X07804">
    <property type="protein sequence ID" value="CAA30647.1"/>
    <property type="molecule type" value="Genomic_DNA"/>
</dbReference>
<dbReference type="GO" id="GO:0005886">
    <property type="term" value="C:plasma membrane"/>
    <property type="evidence" value="ECO:0007669"/>
    <property type="project" value="UniProtKB-SubCell"/>
</dbReference>
<dbReference type="GO" id="GO:0045259">
    <property type="term" value="C:proton-transporting ATP synthase complex"/>
    <property type="evidence" value="ECO:0007669"/>
    <property type="project" value="UniProtKB-KW"/>
</dbReference>
<dbReference type="GO" id="GO:1902600">
    <property type="term" value="P:proton transmembrane transport"/>
    <property type="evidence" value="ECO:0007669"/>
    <property type="project" value="UniProtKB-KW"/>
</dbReference>
<dbReference type="InterPro" id="IPR005598">
    <property type="entry name" value="ATP_synth_I"/>
</dbReference>
<dbReference type="InterPro" id="IPR039072">
    <property type="entry name" value="ATP_synth_I_Bacilli"/>
</dbReference>
<dbReference type="PANTHER" id="PTHR40035">
    <property type="entry name" value="ATP SYNTHASE PROTEIN I"/>
    <property type="match status" value="1"/>
</dbReference>
<dbReference type="PANTHER" id="PTHR40035:SF1">
    <property type="entry name" value="ATP SYNTHASE PROTEIN I"/>
    <property type="match status" value="1"/>
</dbReference>
<dbReference type="Pfam" id="PF03899">
    <property type="entry name" value="ATP-synt_I"/>
    <property type="match status" value="1"/>
</dbReference>
<protein>
    <recommendedName>
        <fullName>ATP synthase protein I</fullName>
    </recommendedName>
</protein>
<accession>P09354</accession>
<sequence>MGNLQAMFWRQVRYILYLLAIYTLGFGFTPYKTVFLSLILGTSISLLMVWNLTWKIEKFGQAVAARKKVRTLGTLSRLALAALAAVIVLTYPQYFHIVPTVLGLMTSYIVIIIDFFFHKWKNDKLQA</sequence>
<name>ATPZ_BACP3</name>
<proteinExistence type="inferred from homology"/>
<feature type="chain" id="PRO_0000071704" description="ATP synthase protein I">
    <location>
        <begin position="1"/>
        <end position="127"/>
    </location>
</feature>
<feature type="transmembrane region" description="Helical" evidence="1">
    <location>
        <begin position="11"/>
        <end position="31"/>
    </location>
</feature>
<feature type="transmembrane region" description="Helical" evidence="1">
    <location>
        <begin position="34"/>
        <end position="54"/>
    </location>
</feature>
<feature type="transmembrane region" description="Helical" evidence="1">
    <location>
        <begin position="72"/>
        <end position="92"/>
    </location>
</feature>
<feature type="transmembrane region" description="Helical" evidence="1">
    <location>
        <begin position="97"/>
        <end position="117"/>
    </location>
</feature>
<keyword id="KW-1003">Cell membrane</keyword>
<keyword id="KW-0138">CF(0)</keyword>
<keyword id="KW-0375">Hydrogen ion transport</keyword>
<keyword id="KW-0406">Ion transport</keyword>
<keyword id="KW-0472">Membrane</keyword>
<keyword id="KW-0812">Transmembrane</keyword>
<keyword id="KW-1133">Transmembrane helix</keyword>
<keyword id="KW-0813">Transport</keyword>
<reference key="1">
    <citation type="journal article" date="1988" name="Biochim. Biophys. Acta">
        <title>Sequence and over-expression of subunits of adenosine triphosphate synthase in thermophilic bacterium PS3.</title>
        <authorList>
            <person name="Ohta S."/>
            <person name="Yohda M."/>
            <person name="Ishizuka M."/>
            <person name="Hirata H."/>
            <person name="Hamamoto T."/>
            <person name="Otawara-Hamamoto Y."/>
            <person name="Matsuda K."/>
            <person name="Kagawa Y."/>
        </authorList>
    </citation>
    <scope>NUCLEOTIDE SEQUENCE [GENOMIC DNA]</scope>
</reference>
<evidence type="ECO:0000255" key="1"/>
<evidence type="ECO:0000305" key="2"/>
<comment type="function">
    <text>A possible function for this protein is to guide the assembly of the membrane sector of the ATPase enzyme complex.</text>
</comment>
<comment type="subcellular location">
    <subcellularLocation>
        <location evidence="2">Cell membrane</location>
        <topology evidence="2">Multi-pass membrane protein</topology>
    </subcellularLocation>
</comment>
<comment type="similarity">
    <text evidence="2">Belongs to the bacterial AtpI family.</text>
</comment>
<gene>
    <name type="primary">atpI</name>
</gene>
<organism>
    <name type="scientific">Bacillus sp. (strain PS3)</name>
    <dbReference type="NCBI Taxonomy" id="2334"/>
    <lineage>
        <taxon>Bacteria</taxon>
        <taxon>Bacillati</taxon>
        <taxon>Bacillota</taxon>
        <taxon>Bacilli</taxon>
        <taxon>Bacillales</taxon>
        <taxon>Bacillaceae</taxon>
        <taxon>Bacillus</taxon>
    </lineage>
</organism>